<organism>
    <name type="scientific">Homo sapiens</name>
    <name type="common">Human</name>
    <dbReference type="NCBI Taxonomy" id="9606"/>
    <lineage>
        <taxon>Eukaryota</taxon>
        <taxon>Metazoa</taxon>
        <taxon>Chordata</taxon>
        <taxon>Craniata</taxon>
        <taxon>Vertebrata</taxon>
        <taxon>Euteleostomi</taxon>
        <taxon>Mammalia</taxon>
        <taxon>Eutheria</taxon>
        <taxon>Euarchontoglires</taxon>
        <taxon>Primates</taxon>
        <taxon>Haplorrhini</taxon>
        <taxon>Catarrhini</taxon>
        <taxon>Hominidae</taxon>
        <taxon>Homo</taxon>
    </lineage>
</organism>
<feature type="chain" id="PRO_0000088084" description="Tyrosine-protein kinase Fer">
    <location>
        <begin position="1"/>
        <end position="822"/>
    </location>
</feature>
<feature type="domain" description="F-BAR" evidence="6">
    <location>
        <begin position="1"/>
        <end position="259"/>
    </location>
</feature>
<feature type="domain" description="SH2" evidence="5">
    <location>
        <begin position="460"/>
        <end position="550"/>
    </location>
</feature>
<feature type="domain" description="Protein kinase" evidence="4">
    <location>
        <begin position="563"/>
        <end position="816"/>
    </location>
</feature>
<feature type="region of interest" description="Important for interaction with membranes containing phosphoinositides">
    <location>
        <begin position="1"/>
        <end position="300"/>
    </location>
</feature>
<feature type="coiled-coil region" evidence="3">
    <location>
        <begin position="123"/>
        <end position="185"/>
    </location>
</feature>
<feature type="coiled-coil region" evidence="3">
    <location>
        <begin position="301"/>
        <end position="390"/>
    </location>
</feature>
<feature type="active site" description="Proton acceptor" evidence="4 7">
    <location>
        <position position="684"/>
    </location>
</feature>
<feature type="binding site" evidence="4">
    <location>
        <begin position="569"/>
        <end position="577"/>
    </location>
    <ligand>
        <name>ATP</name>
        <dbReference type="ChEBI" id="CHEBI:30616"/>
    </ligand>
</feature>
<feature type="binding site" evidence="4">
    <location>
        <position position="591"/>
    </location>
    <ligand>
        <name>ATP</name>
        <dbReference type="ChEBI" id="CHEBI:30616"/>
    </ligand>
</feature>
<feature type="modified residue" description="Phosphotyrosine" evidence="27 28">
    <location>
        <position position="402"/>
    </location>
</feature>
<feature type="modified residue" description="Phosphoserine" evidence="27 28 29">
    <location>
        <position position="434"/>
    </location>
</feature>
<feature type="modified residue" description="Phosphotyrosine; by autocatalysis" evidence="2">
    <location>
        <position position="615"/>
    </location>
</feature>
<feature type="modified residue" description="Phosphotyrosine; by autocatalysis" evidence="2">
    <location>
        <position position="714"/>
    </location>
</feature>
<feature type="splice variant" id="VSP_043846" description="In isoform 3." evidence="25">
    <location>
        <begin position="1"/>
        <end position="369"/>
    </location>
</feature>
<feature type="splice variant" id="VSP_041765" description="In isoform 2." evidence="24">
    <location>
        <begin position="1"/>
        <end position="175"/>
    </location>
</feature>
<feature type="splice variant" id="VSP_043847" description="In isoform 3." evidence="25">
    <original>LRCTEAKFSAQKELLEQKVQENDGKEPPPVVNYEEDARSVTSM</original>
    <variation>MEQKMKCPHCKDQLESGFGSQSCKTCALMFSSEPSTSEVHRDQ</variation>
    <location>
        <begin position="370"/>
        <end position="412"/>
    </location>
</feature>
<feature type="sequence variant" id="VAR_041691" description="In dbSNP:rs35150210." evidence="11">
    <original>V</original>
    <variation>F</variation>
    <location>
        <position position="128"/>
    </location>
</feature>
<feature type="sequence variant" id="VAR_041692" description="In an ovarian Endometrioid carcinoma sample; somatic mutation." evidence="11">
    <original>E</original>
    <variation>Q</variation>
    <location>
        <position position="404"/>
    </location>
</feature>
<feature type="sequence variant" id="VAR_041693" description="In dbSNP:rs33940843." evidence="11">
    <original>M</original>
    <variation>V</variation>
    <location>
        <position position="412"/>
    </location>
</feature>
<feature type="sequence variant" id="VAR_006282" description="In dbSNP:rs2229086." evidence="10 11 21">
    <original>L</original>
    <variation>V</variation>
    <location>
        <position position="439"/>
    </location>
</feature>
<feature type="sequence variant" id="VAR_041694" description="In dbSNP:rs34259824." evidence="11">
    <original>A</original>
    <variation>P</variation>
    <location>
        <position position="443"/>
    </location>
</feature>
<feature type="sequence variant" id="VAR_041695" description="In a lung small cell carcinoma sample; somatic mutation." evidence="11">
    <original>W</original>
    <variation>C</variation>
    <location>
        <position position="460"/>
    </location>
</feature>
<feature type="sequence variant" id="VAR_051695" description="In dbSNP:rs34204308.">
    <original>I</original>
    <variation>T</variation>
    <location>
        <position position="507"/>
    </location>
</feature>
<feature type="sequence variant" id="VAR_041696" description="In dbSNP:rs56097357." evidence="11">
    <original>E</original>
    <variation>Q</variation>
    <location>
        <position position="813"/>
    </location>
</feature>
<feature type="mutagenesis site" description="Abolishes kinase activity. Abolishes location at microtubules." evidence="8">
    <original>R</original>
    <variation>Q</variation>
    <location>
        <position position="483"/>
    </location>
</feature>
<feature type="mutagenesis site" description="Abolishes kinase activity." evidence="23">
    <original>K</original>
    <variation>R</variation>
    <location>
        <position position="591"/>
    </location>
</feature>
<feature type="sequence conflict" description="In Ref. 3; BAG61714." evidence="26" ref="3">
    <original>I</original>
    <variation>L</variation>
    <location>
        <position position="219"/>
    </location>
</feature>
<feature type="sequence conflict" description="In Ref. 3; BAG61714." evidence="26" ref="3">
    <original>S</original>
    <variation>N</variation>
    <location>
        <position position="234"/>
    </location>
</feature>
<feature type="sequence conflict" description="In Ref. 3; BAG61714." evidence="26" ref="3">
    <original>H</original>
    <variation>Q</variation>
    <location>
        <position position="426"/>
    </location>
</feature>
<feature type="sequence conflict" description="In Ref. 2; AEY69041." evidence="26" ref="2">
    <original>M</original>
    <variation>L</variation>
    <location>
        <position position="447"/>
    </location>
</feature>
<feature type="sequence conflict" description="In Ref. 2; AEY69041." evidence="26" ref="2">
    <original>S</original>
    <variation>G</variation>
    <location>
        <position position="485"/>
    </location>
</feature>
<feature type="sequence conflict" description="In Ref. 2; AEY69041." evidence="26" ref="2">
    <original>Y</original>
    <variation>H</variation>
    <location>
        <position position="492"/>
    </location>
</feature>
<feature type="sequence conflict" description="In Ref. 3; BAG61714." evidence="26" ref="3">
    <original>F</original>
    <variation>L</variation>
    <location>
        <position position="505"/>
    </location>
</feature>
<feature type="sequence conflict" description="In Ref. 2; AEY69041." evidence="26" ref="2">
    <original>L</original>
    <variation>F</variation>
    <location>
        <position position="558"/>
    </location>
</feature>
<feature type="sequence conflict" description="In Ref. 3; BAG61714." evidence="26" ref="3">
    <original>E</original>
    <variation>G</variation>
    <location>
        <position position="730"/>
    </location>
</feature>
<feature type="helix" evidence="31">
    <location>
        <begin position="455"/>
        <end position="457"/>
    </location>
</feature>
<feature type="strand" evidence="30">
    <location>
        <begin position="461"/>
        <end position="464"/>
    </location>
</feature>
<feature type="helix" evidence="31">
    <location>
        <begin position="467"/>
        <end position="473"/>
    </location>
</feature>
<feature type="strand" evidence="31">
    <location>
        <begin position="479"/>
        <end position="484"/>
    </location>
</feature>
<feature type="strand" evidence="31">
    <location>
        <begin position="486"/>
        <end position="488"/>
    </location>
</feature>
<feature type="strand" evidence="31">
    <location>
        <begin position="492"/>
        <end position="498"/>
    </location>
</feature>
<feature type="strand" evidence="31">
    <location>
        <begin position="501"/>
        <end position="510"/>
    </location>
</feature>
<feature type="strand" evidence="31">
    <location>
        <begin position="513"/>
        <end position="518"/>
    </location>
</feature>
<feature type="strand" evidence="31">
    <location>
        <begin position="521"/>
        <end position="523"/>
    </location>
</feature>
<feature type="helix" evidence="31">
    <location>
        <begin position="524"/>
        <end position="534"/>
    </location>
</feature>
<feature type="turn" evidence="31">
    <location>
        <begin position="540"/>
        <end position="542"/>
    </location>
</feature>
<gene>
    <name type="primary">FER</name>
    <name type="synonym">TYK3</name>
</gene>
<accession>P16591</accession>
<accession>B2RCR4</accession>
<accession>B4DSQ2</accession>
<accession>H2FLB8</accession>
<keyword id="KW-0002">3D-structure</keyword>
<keyword id="KW-0877">Alternative promoter usage</keyword>
<keyword id="KW-0025">Alternative splicing</keyword>
<keyword id="KW-0067">ATP-binding</keyword>
<keyword id="KW-0965">Cell junction</keyword>
<keyword id="KW-1003">Cell membrane</keyword>
<keyword id="KW-0966">Cell projection</keyword>
<keyword id="KW-0175">Coiled coil</keyword>
<keyword id="KW-0963">Cytoplasm</keyword>
<keyword id="KW-0206">Cytoskeleton</keyword>
<keyword id="KW-0418">Kinase</keyword>
<keyword id="KW-0446">Lipid-binding</keyword>
<keyword id="KW-0472">Membrane</keyword>
<keyword id="KW-0547">Nucleotide-binding</keyword>
<keyword id="KW-0539">Nucleus</keyword>
<keyword id="KW-0597">Phosphoprotein</keyword>
<keyword id="KW-1267">Proteomics identification</keyword>
<keyword id="KW-0656">Proto-oncogene</keyword>
<keyword id="KW-1185">Reference proteome</keyword>
<keyword id="KW-0727">SH2 domain</keyword>
<keyword id="KW-0808">Transferase</keyword>
<keyword id="KW-0829">Tyrosine-protein kinase</keyword>
<keyword id="KW-0832">Ubl conjugation</keyword>
<protein>
    <recommendedName>
        <fullName>Tyrosine-protein kinase Fer</fullName>
        <ecNumber>2.7.10.2</ecNumber>
    </recommendedName>
    <alternativeName>
        <fullName>Feline encephalitis virus-related kinase FER</fullName>
    </alternativeName>
    <alternativeName>
        <fullName>Fujinami poultry sarcoma/Feline sarcoma-related protein Fer</fullName>
    </alternativeName>
    <alternativeName>
        <fullName>Proto-oncogene c-Fer</fullName>
    </alternativeName>
    <alternativeName>
        <fullName>Tyrosine kinase 3</fullName>
    </alternativeName>
    <alternativeName>
        <fullName>p94-Fer</fullName>
    </alternativeName>
</protein>
<comment type="function">
    <text evidence="8 9 13 15 16 17 18 20 22 23">Tyrosine-protein kinase that acts downstream of cell surface receptors for growth factors and plays a role in the regulation of the actin cytoskeleton, microtubule assembly, lamellipodia formation, cell adhesion, cell migration and chemotaxis. Acts downstream of EGFR, KIT, PDGFRA and PDGFRB. Acts downstream of EGFR to promote activation of NF-kappa-B and cell proliferation. May play a role in the regulation of the mitotic cell cycle. Plays a role in the insulin receptor signaling pathway and in activation of phosphatidylinositol 3-kinase. Acts downstream of the activated FCER1 receptor and plays a role in FCER1 (high affinity immunoglobulin epsilon receptor)-mediated signaling in mast cells. Plays a role in the regulation of mast cell degranulation. Plays a role in leukocyte recruitment and diapedesis in response to bacterial lipopolysaccharide (LPS). Plays a role in synapse organization, trafficking of synaptic vesicles, the generation of excitatory postsynaptic currents and neuron-neuron synaptic transmission. Plays a role in neuronal cell death after brain damage. Phosphorylates CTTN, CTNND1, PTK2/FAK1, GAB1, PECAM1 and PTPN11. May phosphorylate JUP and PTPN1. Can phosphorylate STAT3, but the biological relevance of this depends on cell type and stimulus.</text>
</comment>
<comment type="catalytic activity">
    <reaction evidence="7 8 16">
        <text>L-tyrosyl-[protein] + ATP = O-phospho-L-tyrosyl-[protein] + ADP + H(+)</text>
        <dbReference type="Rhea" id="RHEA:10596"/>
        <dbReference type="Rhea" id="RHEA-COMP:10136"/>
        <dbReference type="Rhea" id="RHEA-COMP:20101"/>
        <dbReference type="ChEBI" id="CHEBI:15378"/>
        <dbReference type="ChEBI" id="CHEBI:30616"/>
        <dbReference type="ChEBI" id="CHEBI:46858"/>
        <dbReference type="ChEBI" id="CHEBI:61978"/>
        <dbReference type="ChEBI" id="CHEBI:456216"/>
        <dbReference type="EC" id="2.7.10.2"/>
    </reaction>
</comment>
<comment type="activity regulation">
    <text evidence="16">Activated by phosphatidic acid binding. Activated by hydrogen peroxide (in vitro). Activated by reactive oxygen species (ROS).</text>
</comment>
<comment type="subunit">
    <text evidence="1 8 13 14 15 17 18 22 23">Homotrimer. Interacts with ARHGDIA, IRS1, JAK1, NRP1, PIK3R1, PLEC and TMF1. Interacts with PPP1CA and regulates its phosphorylation at 'Thr-320' (By similarity). Interacts with CTNND1, EGFR, FLT3, PECAM1, PDGFR and STAT3. Interacts (via SH2 domain) with CTTN. Interacts with HSP90; this stabilizes phosphorylated FER and protects FER against proteasomal degradation. Component of a complex that contains at least FER, CTTN and PTK2/FAK1.</text>
</comment>
<comment type="interaction">
    <interactant intactId="EBI-1380661">
        <id>P16591</id>
    </interactant>
    <interactant intactId="EBI-295634">
        <id>Q16543</id>
        <label>CDC37</label>
    </interactant>
    <organismsDiffer>false</organismsDiffer>
    <experiments>6</experiments>
</comment>
<comment type="interaction">
    <interactant intactId="EBI-1380661">
        <id>P16591</id>
    </interactant>
    <interactant intactId="EBI-352572">
        <id>P08238</id>
        <label>HSP90AB1</label>
    </interactant>
    <organismsDiffer>false</organismsDiffer>
    <experiments>2</experiments>
</comment>
<comment type="interaction">
    <interactant intactId="EBI-1380661">
        <id>P16591</id>
    </interactant>
    <interactant intactId="EBI-972394">
        <id>O42486</id>
        <label>Bcat</label>
    </interactant>
    <organismsDiffer>true</organismsDiffer>
    <experiments>2</experiments>
</comment>
<comment type="subcellular location">
    <subcellularLocation>
        <location>Cytoplasm</location>
    </subcellularLocation>
    <subcellularLocation>
        <location>Cytoplasm</location>
        <location>Cytoskeleton</location>
    </subcellularLocation>
    <subcellularLocation>
        <location>Cell membrane</location>
        <topology>Peripheral membrane protein</topology>
        <orientation>Cytoplasmic side</orientation>
    </subcellularLocation>
    <subcellularLocation>
        <location>Cell projection</location>
    </subcellularLocation>
    <subcellularLocation>
        <location>Cell junction</location>
    </subcellularLocation>
    <subcellularLocation>
        <location>Membrane</location>
        <topology>Peripheral membrane protein</topology>
        <orientation>Cytoplasmic side</orientation>
    </subcellularLocation>
    <subcellularLocation>
        <location>Nucleus</location>
    </subcellularLocation>
    <subcellularLocation>
        <location>Cytoplasm</location>
        <location>Cell cortex</location>
    </subcellularLocation>
    <text>Associated with the chromatin. Detected on microtubules in polarized and motile vascular endothelial cells. Colocalizes with F-actin at the cell cortex. Colocalizes with PECAM1 and CTNND1 at nascent cell-cell contacts.</text>
</comment>
<comment type="alternative products">
    <event type="alternative promoter"/>
    <event type="alternative splicing"/>
    <isoform>
        <id>P16591-1</id>
        <name>1</name>
        <name>p94</name>
        <sequence type="displayed"/>
    </isoform>
    <isoform>
        <id>P16591-2</id>
        <name>2</name>
        <sequence type="described" ref="VSP_041765"/>
    </isoform>
    <isoform>
        <id>P16591-3</id>
        <name>3</name>
        <name>FerT</name>
        <name>p47</name>
        <sequence type="described" ref="VSP_043846 VSP_043847"/>
    </isoform>
</comment>
<comment type="tissue specificity">
    <text evidence="12 19 20">Isoform 1 is detected in normal colon and in fibroblasts (at protein level). Isoform 3 is detected in normal testis, in colon carcinoma-derived metastases in lung, liver and ovary, and in colon carcinoma and hepato carcinoma cell lines (at protein level). Isoform 3 is not detected in normal colon or in normal fibroblasts (at protein level). Widely expressed.</text>
</comment>
<comment type="domain">
    <text>The coiled coil domains mediate homooligomerization and are required for location at microtubules.</text>
</comment>
<comment type="domain">
    <text>The N-terminal region including the first coiled coil domain mediates interaction with phosphoinositide-containing membranes.</text>
</comment>
<comment type="PTM">
    <text evidence="17 18">Autophosphorylated.</text>
</comment>
<comment type="PTM">
    <text evidence="1">Polyubiquitinated; this leads to proteasomal degradation.</text>
</comment>
<comment type="miscellaneous">
    <molecule>Isoform 3</molecule>
    <text evidence="26">Produced by alternative promoter usage.</text>
</comment>
<comment type="similarity">
    <text evidence="4">Belongs to the protein kinase superfamily. Tyr protein kinase family. Fes/fps subfamily.</text>
</comment>
<evidence type="ECO:0000250" key="1"/>
<evidence type="ECO:0000250" key="2">
    <source>
        <dbReference type="UniProtKB" id="P70451"/>
    </source>
</evidence>
<evidence type="ECO:0000255" key="3"/>
<evidence type="ECO:0000255" key="4">
    <source>
        <dbReference type="PROSITE-ProRule" id="PRU00159"/>
    </source>
</evidence>
<evidence type="ECO:0000255" key="5">
    <source>
        <dbReference type="PROSITE-ProRule" id="PRU00191"/>
    </source>
</evidence>
<evidence type="ECO:0000255" key="6">
    <source>
        <dbReference type="PROSITE-ProRule" id="PRU01077"/>
    </source>
</evidence>
<evidence type="ECO:0000255" key="7">
    <source>
        <dbReference type="PROSITE-ProRule" id="PRU10028"/>
    </source>
</evidence>
<evidence type="ECO:0000269" key="8">
    <source>
    </source>
</evidence>
<evidence type="ECO:0000269" key="9">
    <source>
    </source>
</evidence>
<evidence type="ECO:0000269" key="10">
    <source>
    </source>
</evidence>
<evidence type="ECO:0000269" key="11">
    <source>
    </source>
</evidence>
<evidence type="ECO:0000269" key="12">
    <source>
    </source>
</evidence>
<evidence type="ECO:0000269" key="13">
    <source>
    </source>
</evidence>
<evidence type="ECO:0000269" key="14">
    <source>
    </source>
</evidence>
<evidence type="ECO:0000269" key="15">
    <source>
    </source>
</evidence>
<evidence type="ECO:0000269" key="16">
    <source>
    </source>
</evidence>
<evidence type="ECO:0000269" key="17">
    <source>
    </source>
</evidence>
<evidence type="ECO:0000269" key="18">
    <source>
    </source>
</evidence>
<evidence type="ECO:0000269" key="19">
    <source>
    </source>
</evidence>
<evidence type="ECO:0000269" key="20">
    <source>
    </source>
</evidence>
<evidence type="ECO:0000269" key="21">
    <source>
    </source>
</evidence>
<evidence type="ECO:0000269" key="22">
    <source>
    </source>
</evidence>
<evidence type="ECO:0000269" key="23">
    <source>
    </source>
</evidence>
<evidence type="ECO:0000303" key="24">
    <source>
    </source>
</evidence>
<evidence type="ECO:0000303" key="25">
    <source>
    </source>
</evidence>
<evidence type="ECO:0000305" key="26"/>
<evidence type="ECO:0007744" key="27">
    <source>
    </source>
</evidence>
<evidence type="ECO:0007744" key="28">
    <source>
    </source>
</evidence>
<evidence type="ECO:0007744" key="29">
    <source>
    </source>
</evidence>
<evidence type="ECO:0007829" key="30">
    <source>
        <dbReference type="PDB" id="2KK6"/>
    </source>
</evidence>
<evidence type="ECO:0007829" key="31">
    <source>
        <dbReference type="PDB" id="6KC4"/>
    </source>
</evidence>
<dbReference type="EC" id="2.7.10.2"/>
<dbReference type="EMBL" id="J03358">
    <property type="protein sequence ID" value="AAA61190.1"/>
    <property type="molecule type" value="mRNA"/>
</dbReference>
<dbReference type="EMBL" id="JQ412173">
    <property type="protein sequence ID" value="AEY69041.1"/>
    <property type="molecule type" value="mRNA"/>
</dbReference>
<dbReference type="EMBL" id="AK299855">
    <property type="protein sequence ID" value="BAG61714.1"/>
    <property type="molecule type" value="mRNA"/>
</dbReference>
<dbReference type="EMBL" id="AK315234">
    <property type="protein sequence ID" value="BAG37661.1"/>
    <property type="molecule type" value="mRNA"/>
</dbReference>
<dbReference type="EMBL" id="AC034207">
    <property type="status" value="NOT_ANNOTATED_CDS"/>
    <property type="molecule type" value="Genomic_DNA"/>
</dbReference>
<dbReference type="EMBL" id="AC008871">
    <property type="status" value="NOT_ANNOTATED_CDS"/>
    <property type="molecule type" value="Genomic_DNA"/>
</dbReference>
<dbReference type="EMBL" id="AC109481">
    <property type="status" value="NOT_ANNOTATED_CDS"/>
    <property type="molecule type" value="Genomic_DNA"/>
</dbReference>
<dbReference type="EMBL" id="AC008955">
    <property type="status" value="NOT_ANNOTATED_CDS"/>
    <property type="molecule type" value="Genomic_DNA"/>
</dbReference>
<dbReference type="EMBL" id="AC010228">
    <property type="status" value="NOT_ANNOTATED_CDS"/>
    <property type="molecule type" value="Genomic_DNA"/>
</dbReference>
<dbReference type="EMBL" id="AC011421">
    <property type="status" value="NOT_ANNOTATED_CDS"/>
    <property type="molecule type" value="Genomic_DNA"/>
</dbReference>
<dbReference type="EMBL" id="AC116428">
    <property type="status" value="NOT_ANNOTATED_CDS"/>
    <property type="molecule type" value="Genomic_DNA"/>
</dbReference>
<dbReference type="EMBL" id="CH471086">
    <property type="protein sequence ID" value="EAW49055.1"/>
    <property type="molecule type" value="Genomic_DNA"/>
</dbReference>
<dbReference type="CCDS" id="CCDS4098.1">
    <molecule id="P16591-1"/>
</dbReference>
<dbReference type="CCDS" id="CCDS78044.1">
    <molecule id="P16591-3"/>
</dbReference>
<dbReference type="PIR" id="A31943">
    <property type="entry name" value="TVHUFE"/>
</dbReference>
<dbReference type="RefSeq" id="NP_001294957.1">
    <molecule id="P16591-2"/>
    <property type="nucleotide sequence ID" value="NM_001308028.2"/>
</dbReference>
<dbReference type="RefSeq" id="NP_001294960.1">
    <molecule id="P16591-3"/>
    <property type="nucleotide sequence ID" value="NM_001308031.2"/>
</dbReference>
<dbReference type="RefSeq" id="NP_001294967.1">
    <property type="nucleotide sequence ID" value="NM_001308038.1"/>
</dbReference>
<dbReference type="RefSeq" id="NP_005237.2">
    <molecule id="P16591-1"/>
    <property type="nucleotide sequence ID" value="NM_005246.4"/>
</dbReference>
<dbReference type="RefSeq" id="XP_011541573.1">
    <property type="nucleotide sequence ID" value="XM_011543271.2"/>
</dbReference>
<dbReference type="RefSeq" id="XP_016864719.1">
    <molecule id="P16591-1"/>
    <property type="nucleotide sequence ID" value="XM_017009230.3"/>
</dbReference>
<dbReference type="RefSeq" id="XP_016864720.1">
    <molecule id="P16591-1"/>
    <property type="nucleotide sequence ID" value="XM_017009231.3"/>
</dbReference>
<dbReference type="RefSeq" id="XP_047272893.1">
    <molecule id="P16591-1"/>
    <property type="nucleotide sequence ID" value="XM_047416937.1"/>
</dbReference>
<dbReference type="RefSeq" id="XP_054208033.1">
    <molecule id="P16591-1"/>
    <property type="nucleotide sequence ID" value="XM_054352058.1"/>
</dbReference>
<dbReference type="RefSeq" id="XP_054208034.1">
    <molecule id="P16591-1"/>
    <property type="nucleotide sequence ID" value="XM_054352059.1"/>
</dbReference>
<dbReference type="RefSeq" id="XP_054208035.1">
    <molecule id="P16591-1"/>
    <property type="nucleotide sequence ID" value="XM_054352060.1"/>
</dbReference>
<dbReference type="PDB" id="2KK6">
    <property type="method" value="NMR"/>
    <property type="chains" value="A=453-557"/>
</dbReference>
<dbReference type="PDB" id="6KC4">
    <property type="method" value="X-ray"/>
    <property type="resolution" value="1.37 A"/>
    <property type="chains" value="A/C/E/G/I/K=453-552"/>
</dbReference>
<dbReference type="PDBsum" id="2KK6"/>
<dbReference type="PDBsum" id="6KC4"/>
<dbReference type="BMRB" id="P16591"/>
<dbReference type="SMR" id="P16591"/>
<dbReference type="BioGRID" id="108532">
    <property type="interactions" value="44"/>
</dbReference>
<dbReference type="CORUM" id="P16591"/>
<dbReference type="FunCoup" id="P16591">
    <property type="interactions" value="2265"/>
</dbReference>
<dbReference type="IntAct" id="P16591">
    <property type="interactions" value="24"/>
</dbReference>
<dbReference type="MINT" id="P16591"/>
<dbReference type="STRING" id="9606.ENSP00000281092"/>
<dbReference type="BindingDB" id="P16591"/>
<dbReference type="ChEMBL" id="CHEMBL3982"/>
<dbReference type="DrugBank" id="DB12010">
    <property type="generic name" value="Fostamatinib"/>
</dbReference>
<dbReference type="DrugCentral" id="P16591"/>
<dbReference type="GuidetoPHARMACOLOGY" id="2022"/>
<dbReference type="GlyGen" id="P16591">
    <property type="glycosylation" value="1 site, 1 O-linked glycan (1 site)"/>
</dbReference>
<dbReference type="iPTMnet" id="P16591"/>
<dbReference type="PhosphoSitePlus" id="P16591"/>
<dbReference type="BioMuta" id="FER"/>
<dbReference type="DMDM" id="97536202"/>
<dbReference type="CPTAC" id="CPTAC-3170"/>
<dbReference type="CPTAC" id="CPTAC-3171"/>
<dbReference type="jPOST" id="P16591"/>
<dbReference type="MassIVE" id="P16591"/>
<dbReference type="PaxDb" id="9606-ENSP00000281092"/>
<dbReference type="PeptideAtlas" id="P16591"/>
<dbReference type="ProteomicsDB" id="53382">
    <molecule id="P16591-1"/>
</dbReference>
<dbReference type="ProteomicsDB" id="53383">
    <molecule id="P16591-2"/>
</dbReference>
<dbReference type="ProteomicsDB" id="53384">
    <molecule id="P16591-3"/>
</dbReference>
<dbReference type="Pumba" id="P16591"/>
<dbReference type="Antibodypedia" id="2083">
    <property type="antibodies" value="599 antibodies from 40 providers"/>
</dbReference>
<dbReference type="DNASU" id="2241"/>
<dbReference type="Ensembl" id="ENST00000281092.9">
    <molecule id="P16591-1"/>
    <property type="protein sequence ID" value="ENSP00000281092.4"/>
    <property type="gene ID" value="ENSG00000151422.14"/>
</dbReference>
<dbReference type="Ensembl" id="ENST00000618353.1">
    <molecule id="P16591-3"/>
    <property type="protein sequence ID" value="ENSP00000484767.1"/>
    <property type="gene ID" value="ENSG00000151422.14"/>
</dbReference>
<dbReference type="GeneID" id="2241"/>
<dbReference type="KEGG" id="hsa:2241"/>
<dbReference type="MANE-Select" id="ENST00000281092.9">
    <property type="protein sequence ID" value="ENSP00000281092.4"/>
    <property type="RefSeq nucleotide sequence ID" value="NM_005246.4"/>
    <property type="RefSeq protein sequence ID" value="NP_005237.2"/>
</dbReference>
<dbReference type="UCSC" id="uc031skp.2">
    <molecule id="P16591-1"/>
    <property type="organism name" value="human"/>
</dbReference>
<dbReference type="AGR" id="HGNC:3655"/>
<dbReference type="CTD" id="2241"/>
<dbReference type="DisGeNET" id="2241"/>
<dbReference type="GeneCards" id="FER"/>
<dbReference type="HGNC" id="HGNC:3655">
    <property type="gene designation" value="FER"/>
</dbReference>
<dbReference type="HPA" id="ENSG00000151422">
    <property type="expression patterns" value="Low tissue specificity"/>
</dbReference>
<dbReference type="MIM" id="176942">
    <property type="type" value="gene"/>
</dbReference>
<dbReference type="neXtProt" id="NX_P16591"/>
<dbReference type="OpenTargets" id="ENSG00000151422"/>
<dbReference type="PharmGKB" id="PA28095"/>
<dbReference type="VEuPathDB" id="HostDB:ENSG00000151422"/>
<dbReference type="eggNOG" id="KOG0194">
    <property type="taxonomic scope" value="Eukaryota"/>
</dbReference>
<dbReference type="GeneTree" id="ENSGT00940000154997"/>
<dbReference type="HOGENOM" id="CLU_005265_0_0_1"/>
<dbReference type="InParanoid" id="P16591"/>
<dbReference type="OMA" id="QEHYHES"/>
<dbReference type="OrthoDB" id="546826at2759"/>
<dbReference type="PAN-GO" id="P16591">
    <property type="GO annotations" value="10 GO annotations based on evolutionary models"/>
</dbReference>
<dbReference type="PhylomeDB" id="P16591"/>
<dbReference type="TreeFam" id="TF315363"/>
<dbReference type="BRENDA" id="2.7.10.2">
    <property type="organism ID" value="2681"/>
</dbReference>
<dbReference type="PathwayCommons" id="P16591"/>
<dbReference type="Reactome" id="R-HSA-1433557">
    <property type="pathway name" value="Signaling by SCF-KIT"/>
</dbReference>
<dbReference type="SignaLink" id="P16591"/>
<dbReference type="SIGNOR" id="P16591"/>
<dbReference type="BioGRID-ORCS" id="2241">
    <property type="hits" value="19 hits in 1193 CRISPR screens"/>
</dbReference>
<dbReference type="ChiTaRS" id="FER">
    <property type="organism name" value="human"/>
</dbReference>
<dbReference type="EvolutionaryTrace" id="P16591"/>
<dbReference type="GeneWiki" id="FER_(gene)"/>
<dbReference type="GenomeRNAi" id="2241"/>
<dbReference type="Pharos" id="P16591">
    <property type="development level" value="Tclin"/>
</dbReference>
<dbReference type="PRO" id="PR:P16591"/>
<dbReference type="Proteomes" id="UP000005640">
    <property type="component" value="Chromosome 5"/>
</dbReference>
<dbReference type="RNAct" id="P16591">
    <property type="molecule type" value="protein"/>
</dbReference>
<dbReference type="Bgee" id="ENSG00000151422">
    <property type="expression patterns" value="Expressed in calcaneal tendon and 187 other cell types or tissues"/>
</dbReference>
<dbReference type="ExpressionAtlas" id="P16591">
    <property type="expression patterns" value="baseline and differential"/>
</dbReference>
<dbReference type="GO" id="GO:0005912">
    <property type="term" value="C:adherens junction"/>
    <property type="evidence" value="ECO:0007669"/>
    <property type="project" value="Ensembl"/>
</dbReference>
<dbReference type="GO" id="GO:0005938">
    <property type="term" value="C:cell cortex"/>
    <property type="evidence" value="ECO:0007669"/>
    <property type="project" value="UniProtKB-SubCell"/>
</dbReference>
<dbReference type="GO" id="GO:0042995">
    <property type="term" value="C:cell projection"/>
    <property type="evidence" value="ECO:0007669"/>
    <property type="project" value="UniProtKB-SubCell"/>
</dbReference>
<dbReference type="GO" id="GO:0000785">
    <property type="term" value="C:chromatin"/>
    <property type="evidence" value="ECO:0000314"/>
    <property type="project" value="UniProtKB"/>
</dbReference>
<dbReference type="GO" id="GO:0005737">
    <property type="term" value="C:cytoplasm"/>
    <property type="evidence" value="ECO:0000314"/>
    <property type="project" value="UniProtKB"/>
</dbReference>
<dbReference type="GO" id="GO:0009898">
    <property type="term" value="C:cytoplasmic side of plasma membrane"/>
    <property type="evidence" value="ECO:0000314"/>
    <property type="project" value="UniProtKB"/>
</dbReference>
<dbReference type="GO" id="GO:0005856">
    <property type="term" value="C:cytoskeleton"/>
    <property type="evidence" value="ECO:0007669"/>
    <property type="project" value="UniProtKB-SubCell"/>
</dbReference>
<dbReference type="GO" id="GO:0005829">
    <property type="term" value="C:cytosol"/>
    <property type="evidence" value="ECO:0000314"/>
    <property type="project" value="HPA"/>
</dbReference>
<dbReference type="GO" id="GO:0005634">
    <property type="term" value="C:nucleus"/>
    <property type="evidence" value="ECO:0000314"/>
    <property type="project" value="UniProtKB"/>
</dbReference>
<dbReference type="GO" id="GO:0005886">
    <property type="term" value="C:plasma membrane"/>
    <property type="evidence" value="ECO:0000318"/>
    <property type="project" value="GO_Central"/>
</dbReference>
<dbReference type="GO" id="GO:0032991">
    <property type="term" value="C:protein-containing complex"/>
    <property type="evidence" value="ECO:0007669"/>
    <property type="project" value="Ensembl"/>
</dbReference>
<dbReference type="GO" id="GO:0005524">
    <property type="term" value="F:ATP binding"/>
    <property type="evidence" value="ECO:0007669"/>
    <property type="project" value="UniProtKB-KW"/>
</dbReference>
<dbReference type="GO" id="GO:0005154">
    <property type="term" value="F:epidermal growth factor receptor binding"/>
    <property type="evidence" value="ECO:0000314"/>
    <property type="project" value="UniProtKB"/>
</dbReference>
<dbReference type="GO" id="GO:0008289">
    <property type="term" value="F:lipid binding"/>
    <property type="evidence" value="ECO:0000314"/>
    <property type="project" value="UniProtKB"/>
</dbReference>
<dbReference type="GO" id="GO:0004715">
    <property type="term" value="F:non-membrane spanning protein tyrosine kinase activity"/>
    <property type="evidence" value="ECO:0000314"/>
    <property type="project" value="UniProtKB"/>
</dbReference>
<dbReference type="GO" id="GO:0008157">
    <property type="term" value="F:protein phosphatase 1 binding"/>
    <property type="evidence" value="ECO:0007669"/>
    <property type="project" value="Ensembl"/>
</dbReference>
<dbReference type="GO" id="GO:0004713">
    <property type="term" value="F:protein tyrosine kinase activity"/>
    <property type="evidence" value="ECO:0000318"/>
    <property type="project" value="GO_Central"/>
</dbReference>
<dbReference type="GO" id="GO:0030036">
    <property type="term" value="P:actin cytoskeleton organization"/>
    <property type="evidence" value="ECO:0000250"/>
    <property type="project" value="UniProtKB"/>
</dbReference>
<dbReference type="GO" id="GO:0034333">
    <property type="term" value="P:adherens junction assembly"/>
    <property type="evidence" value="ECO:0007669"/>
    <property type="project" value="Ensembl"/>
</dbReference>
<dbReference type="GO" id="GO:0120179">
    <property type="term" value="P:adherens junction disassembly"/>
    <property type="evidence" value="ECO:0007669"/>
    <property type="project" value="Ensembl"/>
</dbReference>
<dbReference type="GO" id="GO:0007155">
    <property type="term" value="P:cell adhesion"/>
    <property type="evidence" value="ECO:0000318"/>
    <property type="project" value="GO_Central"/>
</dbReference>
<dbReference type="GO" id="GO:0044331">
    <property type="term" value="P:cell-cell adhesion mediated by cadherin"/>
    <property type="evidence" value="ECO:0000250"/>
    <property type="project" value="UniProtKB"/>
</dbReference>
<dbReference type="GO" id="GO:0036006">
    <property type="term" value="P:cellular response to macrophage colony-stimulating factor stimulus"/>
    <property type="evidence" value="ECO:0000315"/>
    <property type="project" value="UniProtKB"/>
</dbReference>
<dbReference type="GO" id="GO:0034614">
    <property type="term" value="P:cellular response to reactive oxygen species"/>
    <property type="evidence" value="ECO:0000250"/>
    <property type="project" value="UniProtKB"/>
</dbReference>
<dbReference type="GO" id="GO:0006935">
    <property type="term" value="P:chemotaxis"/>
    <property type="evidence" value="ECO:0000318"/>
    <property type="project" value="GO_Central"/>
</dbReference>
<dbReference type="GO" id="GO:0019221">
    <property type="term" value="P:cytokine-mediated signaling pathway"/>
    <property type="evidence" value="ECO:0000315"/>
    <property type="project" value="UniProtKB"/>
</dbReference>
<dbReference type="GO" id="GO:0050904">
    <property type="term" value="P:diapedesis"/>
    <property type="evidence" value="ECO:0000250"/>
    <property type="project" value="UniProtKB"/>
</dbReference>
<dbReference type="GO" id="GO:0035426">
    <property type="term" value="P:extracellular matrix-cell signaling"/>
    <property type="evidence" value="ECO:0000250"/>
    <property type="project" value="UniProtKB"/>
</dbReference>
<dbReference type="GO" id="GO:0038095">
    <property type="term" value="P:Fc-epsilon receptor signaling pathway"/>
    <property type="evidence" value="ECO:0000250"/>
    <property type="project" value="UniProtKB"/>
</dbReference>
<dbReference type="GO" id="GO:0007281">
    <property type="term" value="P:germ cell development"/>
    <property type="evidence" value="ECO:0007669"/>
    <property type="project" value="Ensembl"/>
</dbReference>
<dbReference type="GO" id="GO:0008286">
    <property type="term" value="P:insulin receptor signaling pathway"/>
    <property type="evidence" value="ECO:0000250"/>
    <property type="project" value="UniProtKB"/>
</dbReference>
<dbReference type="GO" id="GO:0070102">
    <property type="term" value="P:interleukin-6-mediated signaling pathway"/>
    <property type="evidence" value="ECO:0000315"/>
    <property type="project" value="UniProtKB"/>
</dbReference>
<dbReference type="GO" id="GO:0035556">
    <property type="term" value="P:intracellular signal transduction"/>
    <property type="evidence" value="ECO:0000304"/>
    <property type="project" value="ProtInc"/>
</dbReference>
<dbReference type="GO" id="GO:0038109">
    <property type="term" value="P:Kit signaling pathway"/>
    <property type="evidence" value="ECO:0000250"/>
    <property type="project" value="UniProtKB"/>
</dbReference>
<dbReference type="GO" id="GO:0000226">
    <property type="term" value="P:microtubule cytoskeleton organization"/>
    <property type="evidence" value="ECO:0000315"/>
    <property type="project" value="UniProtKB"/>
</dbReference>
<dbReference type="GO" id="GO:0033007">
    <property type="term" value="P:negative regulation of mast cell activation involved in immune response"/>
    <property type="evidence" value="ECO:0000250"/>
    <property type="project" value="UniProtKB"/>
</dbReference>
<dbReference type="GO" id="GO:0018108">
    <property type="term" value="P:peptidyl-tyrosine phosphorylation"/>
    <property type="evidence" value="ECO:0000314"/>
    <property type="project" value="UniProtKB"/>
</dbReference>
<dbReference type="GO" id="GO:0048008">
    <property type="term" value="P:platelet-derived growth factor receptor signaling pathway"/>
    <property type="evidence" value="ECO:0000250"/>
    <property type="project" value="UniProtKB"/>
</dbReference>
<dbReference type="GO" id="GO:0030838">
    <property type="term" value="P:positive regulation of actin filament polymerization"/>
    <property type="evidence" value="ECO:0000315"/>
    <property type="project" value="UniProtKB"/>
</dbReference>
<dbReference type="GO" id="GO:0030335">
    <property type="term" value="P:positive regulation of cell migration"/>
    <property type="evidence" value="ECO:0000315"/>
    <property type="project" value="UniProtKB"/>
</dbReference>
<dbReference type="GO" id="GO:0008284">
    <property type="term" value="P:positive regulation of cell population proliferation"/>
    <property type="evidence" value="ECO:0000315"/>
    <property type="project" value="CACAO"/>
</dbReference>
<dbReference type="GO" id="GO:0051092">
    <property type="term" value="P:positive regulation of NF-kappaB transcription factor activity"/>
    <property type="evidence" value="ECO:0000315"/>
    <property type="project" value="UniProtKB"/>
</dbReference>
<dbReference type="GO" id="GO:0051897">
    <property type="term" value="P:positive regulation of phosphatidylinositol 3-kinase/protein kinase B signal transduction"/>
    <property type="evidence" value="ECO:0007669"/>
    <property type="project" value="Ensembl"/>
</dbReference>
<dbReference type="GO" id="GO:0046777">
    <property type="term" value="P:protein autophosphorylation"/>
    <property type="evidence" value="ECO:0000314"/>
    <property type="project" value="UniProtKB"/>
</dbReference>
<dbReference type="GO" id="GO:0006468">
    <property type="term" value="P:protein phosphorylation"/>
    <property type="evidence" value="ECO:0000304"/>
    <property type="project" value="ProtInc"/>
</dbReference>
<dbReference type="GO" id="GO:0042058">
    <property type="term" value="P:regulation of epidermal growth factor receptor signaling pathway"/>
    <property type="evidence" value="ECO:0000315"/>
    <property type="project" value="UniProtKB"/>
</dbReference>
<dbReference type="GO" id="GO:0010762">
    <property type="term" value="P:regulation of fibroblast migration"/>
    <property type="evidence" value="ECO:0007669"/>
    <property type="project" value="Ensembl"/>
</dbReference>
<dbReference type="GO" id="GO:0010591">
    <property type="term" value="P:regulation of lamellipodium assembly"/>
    <property type="evidence" value="ECO:0000314"/>
    <property type="project" value="UniProtKB"/>
</dbReference>
<dbReference type="GO" id="GO:0001932">
    <property type="term" value="P:regulation of protein phosphorylation"/>
    <property type="evidence" value="ECO:0000250"/>
    <property type="project" value="UniProtKB"/>
</dbReference>
<dbReference type="GO" id="GO:0032496">
    <property type="term" value="P:response to lipopolysaccharide"/>
    <property type="evidence" value="ECO:0000250"/>
    <property type="project" value="UniProtKB"/>
</dbReference>
<dbReference type="GO" id="GO:0036119">
    <property type="term" value="P:response to platelet-derived growth factor"/>
    <property type="evidence" value="ECO:0000250"/>
    <property type="project" value="UniProtKB"/>
</dbReference>
<dbReference type="GO" id="GO:0072520">
    <property type="term" value="P:seminiferous tubule development"/>
    <property type="evidence" value="ECO:0007669"/>
    <property type="project" value="Ensembl"/>
</dbReference>
<dbReference type="GO" id="GO:0060009">
    <property type="term" value="P:Sertoli cell development"/>
    <property type="evidence" value="ECO:0007669"/>
    <property type="project" value="Ensembl"/>
</dbReference>
<dbReference type="GO" id="GO:0034446">
    <property type="term" value="P:substrate adhesion-dependent cell spreading"/>
    <property type="evidence" value="ECO:0000250"/>
    <property type="project" value="UniProtKB"/>
</dbReference>
<dbReference type="GO" id="GO:0007260">
    <property type="term" value="P:tyrosine phosphorylation of STAT protein"/>
    <property type="evidence" value="ECO:0000314"/>
    <property type="project" value="UniProtKB"/>
</dbReference>
<dbReference type="CDD" id="cd07686">
    <property type="entry name" value="F-BAR_Fer"/>
    <property type="match status" value="1"/>
</dbReference>
<dbReference type="CDD" id="cd10361">
    <property type="entry name" value="SH2_Fps_family"/>
    <property type="match status" value="1"/>
</dbReference>
<dbReference type="FunFam" id="1.10.287.160:FF:000005">
    <property type="entry name" value="Tyrosine-protein kinase"/>
    <property type="match status" value="1"/>
</dbReference>
<dbReference type="FunFam" id="1.10.510.10:FF:000622">
    <property type="entry name" value="Tyrosine-protein kinase"/>
    <property type="match status" value="1"/>
</dbReference>
<dbReference type="FunFam" id="1.20.1270.60:FF:000029">
    <property type="entry name" value="Tyrosine-protein kinase"/>
    <property type="match status" value="1"/>
</dbReference>
<dbReference type="FunFam" id="3.30.200.20:FF:000089">
    <property type="entry name" value="Tyrosine-protein kinase"/>
    <property type="match status" value="1"/>
</dbReference>
<dbReference type="FunFam" id="3.30.505.10:FF:000020">
    <property type="entry name" value="Tyrosine-protein kinase"/>
    <property type="match status" value="1"/>
</dbReference>
<dbReference type="Gene3D" id="1.20.1270.60">
    <property type="entry name" value="Arfaptin homology (AH) domain/BAR domain"/>
    <property type="match status" value="1"/>
</dbReference>
<dbReference type="Gene3D" id="1.10.287.160">
    <property type="entry name" value="HR1 repeat"/>
    <property type="match status" value="1"/>
</dbReference>
<dbReference type="Gene3D" id="3.30.200.20">
    <property type="entry name" value="Phosphorylase Kinase, domain 1"/>
    <property type="match status" value="1"/>
</dbReference>
<dbReference type="Gene3D" id="3.30.505.10">
    <property type="entry name" value="SH2 domain"/>
    <property type="match status" value="1"/>
</dbReference>
<dbReference type="Gene3D" id="1.10.510.10">
    <property type="entry name" value="Transferase(Phosphotransferase) domain 1"/>
    <property type="match status" value="1"/>
</dbReference>
<dbReference type="InterPro" id="IPR027267">
    <property type="entry name" value="AH/BAR_dom_sf"/>
</dbReference>
<dbReference type="InterPro" id="IPR031160">
    <property type="entry name" value="F_BAR"/>
</dbReference>
<dbReference type="InterPro" id="IPR001060">
    <property type="entry name" value="FCH_dom"/>
</dbReference>
<dbReference type="InterPro" id="IPR037452">
    <property type="entry name" value="Fer_F-BAR"/>
</dbReference>
<dbReference type="InterPro" id="IPR035849">
    <property type="entry name" value="Fes/Fps/Fer_SH2"/>
</dbReference>
<dbReference type="InterPro" id="IPR011009">
    <property type="entry name" value="Kinase-like_dom_sf"/>
</dbReference>
<dbReference type="InterPro" id="IPR050198">
    <property type="entry name" value="Non-receptor_tyrosine_kinases"/>
</dbReference>
<dbReference type="InterPro" id="IPR000719">
    <property type="entry name" value="Prot_kinase_dom"/>
</dbReference>
<dbReference type="InterPro" id="IPR017441">
    <property type="entry name" value="Protein_kinase_ATP_BS"/>
</dbReference>
<dbReference type="InterPro" id="IPR001245">
    <property type="entry name" value="Ser-Thr/Tyr_kinase_cat_dom"/>
</dbReference>
<dbReference type="InterPro" id="IPR000980">
    <property type="entry name" value="SH2"/>
</dbReference>
<dbReference type="InterPro" id="IPR036860">
    <property type="entry name" value="SH2_dom_sf"/>
</dbReference>
<dbReference type="InterPro" id="IPR016250">
    <property type="entry name" value="Tyr-prot_kinase_Fes/Fps"/>
</dbReference>
<dbReference type="InterPro" id="IPR008266">
    <property type="entry name" value="Tyr_kinase_AS"/>
</dbReference>
<dbReference type="InterPro" id="IPR020635">
    <property type="entry name" value="Tyr_kinase_cat_dom"/>
</dbReference>
<dbReference type="PANTHER" id="PTHR24418">
    <property type="entry name" value="TYROSINE-PROTEIN KINASE"/>
    <property type="match status" value="1"/>
</dbReference>
<dbReference type="Pfam" id="PF00611">
    <property type="entry name" value="FCH"/>
    <property type="match status" value="1"/>
</dbReference>
<dbReference type="Pfam" id="PF07714">
    <property type="entry name" value="PK_Tyr_Ser-Thr"/>
    <property type="match status" value="1"/>
</dbReference>
<dbReference type="Pfam" id="PF00017">
    <property type="entry name" value="SH2"/>
    <property type="match status" value="1"/>
</dbReference>
<dbReference type="PIRSF" id="PIRSF000632">
    <property type="entry name" value="TyrPK_fps"/>
    <property type="match status" value="1"/>
</dbReference>
<dbReference type="PRINTS" id="PR00401">
    <property type="entry name" value="SH2DOMAIN"/>
</dbReference>
<dbReference type="PRINTS" id="PR00109">
    <property type="entry name" value="TYRKINASE"/>
</dbReference>
<dbReference type="SMART" id="SM00055">
    <property type="entry name" value="FCH"/>
    <property type="match status" value="1"/>
</dbReference>
<dbReference type="SMART" id="SM00252">
    <property type="entry name" value="SH2"/>
    <property type="match status" value="1"/>
</dbReference>
<dbReference type="SMART" id="SM00219">
    <property type="entry name" value="TyrKc"/>
    <property type="match status" value="1"/>
</dbReference>
<dbReference type="SUPFAM" id="SSF103657">
    <property type="entry name" value="BAR/IMD domain-like"/>
    <property type="match status" value="1"/>
</dbReference>
<dbReference type="SUPFAM" id="SSF56112">
    <property type="entry name" value="Protein kinase-like (PK-like)"/>
    <property type="match status" value="1"/>
</dbReference>
<dbReference type="SUPFAM" id="SSF55550">
    <property type="entry name" value="SH2 domain"/>
    <property type="match status" value="1"/>
</dbReference>
<dbReference type="PROSITE" id="PS51741">
    <property type="entry name" value="F_BAR"/>
    <property type="match status" value="1"/>
</dbReference>
<dbReference type="PROSITE" id="PS00107">
    <property type="entry name" value="PROTEIN_KINASE_ATP"/>
    <property type="match status" value="1"/>
</dbReference>
<dbReference type="PROSITE" id="PS50011">
    <property type="entry name" value="PROTEIN_KINASE_DOM"/>
    <property type="match status" value="1"/>
</dbReference>
<dbReference type="PROSITE" id="PS00109">
    <property type="entry name" value="PROTEIN_KINASE_TYR"/>
    <property type="match status" value="1"/>
</dbReference>
<dbReference type="PROSITE" id="PS50001">
    <property type="entry name" value="SH2"/>
    <property type="match status" value="1"/>
</dbReference>
<reference key="1">
    <citation type="journal article" date="1989" name="Mol. Cell. Biol.">
        <title>Isolation and sequence analysis of a novel human tyrosine kinase gene.</title>
        <authorList>
            <person name="Hao Q.-L."/>
            <person name="Heisterkamp N."/>
            <person name="Groffen J."/>
        </authorList>
    </citation>
    <scope>NUCLEOTIDE SEQUENCE [MRNA] (ISOFORM 1)</scope>
    <scope>VARIANT VAL-439</scope>
</reference>
<reference key="2">
    <citation type="journal article" date="2012" name="J. Biol. Chem.">
        <title>Intronic promoter drives the BORIS-regulated expression of FerT in colon carcinoma cells.</title>
        <authorList>
            <person name="Makovski A."/>
            <person name="Yaffe E."/>
            <person name="Shpungin S."/>
            <person name="Nir U."/>
        </authorList>
    </citation>
    <scope>NUCLEOTIDE SEQUENCE [MRNA] (ISOFORM 3)</scope>
    <scope>ALTERNATIVE PROMOTER USAGE</scope>
    <scope>FUNCTION</scope>
    <scope>IDENTIFICATION BY MASS SPECTROMETRY</scope>
    <scope>TISSUE SPECIFICITY</scope>
    <source>
        <tissue>Testis</tissue>
    </source>
</reference>
<reference key="3">
    <citation type="journal article" date="2004" name="Nat. Genet.">
        <title>Complete sequencing and characterization of 21,243 full-length human cDNAs.</title>
        <authorList>
            <person name="Ota T."/>
            <person name="Suzuki Y."/>
            <person name="Nishikawa T."/>
            <person name="Otsuki T."/>
            <person name="Sugiyama T."/>
            <person name="Irie R."/>
            <person name="Wakamatsu A."/>
            <person name="Hayashi K."/>
            <person name="Sato H."/>
            <person name="Nagai K."/>
            <person name="Kimura K."/>
            <person name="Makita H."/>
            <person name="Sekine M."/>
            <person name="Obayashi M."/>
            <person name="Nishi T."/>
            <person name="Shibahara T."/>
            <person name="Tanaka T."/>
            <person name="Ishii S."/>
            <person name="Yamamoto J."/>
            <person name="Saito K."/>
            <person name="Kawai Y."/>
            <person name="Isono Y."/>
            <person name="Nakamura Y."/>
            <person name="Nagahari K."/>
            <person name="Murakami K."/>
            <person name="Yasuda T."/>
            <person name="Iwayanagi T."/>
            <person name="Wagatsuma M."/>
            <person name="Shiratori A."/>
            <person name="Sudo H."/>
            <person name="Hosoiri T."/>
            <person name="Kaku Y."/>
            <person name="Kodaira H."/>
            <person name="Kondo H."/>
            <person name="Sugawara M."/>
            <person name="Takahashi M."/>
            <person name="Kanda K."/>
            <person name="Yokoi T."/>
            <person name="Furuya T."/>
            <person name="Kikkawa E."/>
            <person name="Omura Y."/>
            <person name="Abe K."/>
            <person name="Kamihara K."/>
            <person name="Katsuta N."/>
            <person name="Sato K."/>
            <person name="Tanikawa M."/>
            <person name="Yamazaki M."/>
            <person name="Ninomiya K."/>
            <person name="Ishibashi T."/>
            <person name="Yamashita H."/>
            <person name="Murakawa K."/>
            <person name="Fujimori K."/>
            <person name="Tanai H."/>
            <person name="Kimata M."/>
            <person name="Watanabe M."/>
            <person name="Hiraoka S."/>
            <person name="Chiba Y."/>
            <person name="Ishida S."/>
            <person name="Ono Y."/>
            <person name="Takiguchi S."/>
            <person name="Watanabe S."/>
            <person name="Yosida M."/>
            <person name="Hotuta T."/>
            <person name="Kusano J."/>
            <person name="Kanehori K."/>
            <person name="Takahashi-Fujii A."/>
            <person name="Hara H."/>
            <person name="Tanase T.-O."/>
            <person name="Nomura Y."/>
            <person name="Togiya S."/>
            <person name="Komai F."/>
            <person name="Hara R."/>
            <person name="Takeuchi K."/>
            <person name="Arita M."/>
            <person name="Imose N."/>
            <person name="Musashino K."/>
            <person name="Yuuki H."/>
            <person name="Oshima A."/>
            <person name="Sasaki N."/>
            <person name="Aotsuka S."/>
            <person name="Yoshikawa Y."/>
            <person name="Matsunawa H."/>
            <person name="Ichihara T."/>
            <person name="Shiohata N."/>
            <person name="Sano S."/>
            <person name="Moriya S."/>
            <person name="Momiyama H."/>
            <person name="Satoh N."/>
            <person name="Takami S."/>
            <person name="Terashima Y."/>
            <person name="Suzuki O."/>
            <person name="Nakagawa S."/>
            <person name="Senoh A."/>
            <person name="Mizoguchi H."/>
            <person name="Goto Y."/>
            <person name="Shimizu F."/>
            <person name="Wakebe H."/>
            <person name="Hishigaki H."/>
            <person name="Watanabe T."/>
            <person name="Sugiyama A."/>
            <person name="Takemoto M."/>
            <person name="Kawakami B."/>
            <person name="Yamazaki M."/>
            <person name="Watanabe K."/>
            <person name="Kumagai A."/>
            <person name="Itakura S."/>
            <person name="Fukuzumi Y."/>
            <person name="Fujimori Y."/>
            <person name="Komiyama M."/>
            <person name="Tashiro H."/>
            <person name="Tanigami A."/>
            <person name="Fujiwara T."/>
            <person name="Ono T."/>
            <person name="Yamada K."/>
            <person name="Fujii Y."/>
            <person name="Ozaki K."/>
            <person name="Hirao M."/>
            <person name="Ohmori Y."/>
            <person name="Kawabata A."/>
            <person name="Hikiji T."/>
            <person name="Kobatake N."/>
            <person name="Inagaki H."/>
            <person name="Ikema Y."/>
            <person name="Okamoto S."/>
            <person name="Okitani R."/>
            <person name="Kawakami T."/>
            <person name="Noguchi S."/>
            <person name="Itoh T."/>
            <person name="Shigeta K."/>
            <person name="Senba T."/>
            <person name="Matsumura K."/>
            <person name="Nakajima Y."/>
            <person name="Mizuno T."/>
            <person name="Morinaga M."/>
            <person name="Sasaki M."/>
            <person name="Togashi T."/>
            <person name="Oyama M."/>
            <person name="Hata H."/>
            <person name="Watanabe M."/>
            <person name="Komatsu T."/>
            <person name="Mizushima-Sugano J."/>
            <person name="Satoh T."/>
            <person name="Shirai Y."/>
            <person name="Takahashi Y."/>
            <person name="Nakagawa K."/>
            <person name="Okumura K."/>
            <person name="Nagase T."/>
            <person name="Nomura N."/>
            <person name="Kikuchi H."/>
            <person name="Masuho Y."/>
            <person name="Yamashita R."/>
            <person name="Nakai K."/>
            <person name="Yada T."/>
            <person name="Nakamura Y."/>
            <person name="Ohara O."/>
            <person name="Isogai T."/>
            <person name="Sugano S."/>
        </authorList>
    </citation>
    <scope>NUCLEOTIDE SEQUENCE [LARGE SCALE MRNA] (ISOFORMS 1 AND 2)</scope>
    <source>
        <tissue>Brain</tissue>
    </source>
</reference>
<reference key="4">
    <citation type="journal article" date="2004" name="Nature">
        <title>The DNA sequence and comparative analysis of human chromosome 5.</title>
        <authorList>
            <person name="Schmutz J."/>
            <person name="Martin J."/>
            <person name="Terry A."/>
            <person name="Couronne O."/>
            <person name="Grimwood J."/>
            <person name="Lowry S."/>
            <person name="Gordon L.A."/>
            <person name="Scott D."/>
            <person name="Xie G."/>
            <person name="Huang W."/>
            <person name="Hellsten U."/>
            <person name="Tran-Gyamfi M."/>
            <person name="She X."/>
            <person name="Prabhakar S."/>
            <person name="Aerts A."/>
            <person name="Altherr M."/>
            <person name="Bajorek E."/>
            <person name="Black S."/>
            <person name="Branscomb E."/>
            <person name="Caoile C."/>
            <person name="Challacombe J.F."/>
            <person name="Chan Y.M."/>
            <person name="Denys M."/>
            <person name="Detter J.C."/>
            <person name="Escobar J."/>
            <person name="Flowers D."/>
            <person name="Fotopulos D."/>
            <person name="Glavina T."/>
            <person name="Gomez M."/>
            <person name="Gonzales E."/>
            <person name="Goodstein D."/>
            <person name="Grigoriev I."/>
            <person name="Groza M."/>
            <person name="Hammon N."/>
            <person name="Hawkins T."/>
            <person name="Haydu L."/>
            <person name="Israni S."/>
            <person name="Jett J."/>
            <person name="Kadner K."/>
            <person name="Kimball H."/>
            <person name="Kobayashi A."/>
            <person name="Lopez F."/>
            <person name="Lou Y."/>
            <person name="Martinez D."/>
            <person name="Medina C."/>
            <person name="Morgan J."/>
            <person name="Nandkeshwar R."/>
            <person name="Noonan J.P."/>
            <person name="Pitluck S."/>
            <person name="Pollard M."/>
            <person name="Predki P."/>
            <person name="Priest J."/>
            <person name="Ramirez L."/>
            <person name="Retterer J."/>
            <person name="Rodriguez A."/>
            <person name="Rogers S."/>
            <person name="Salamov A."/>
            <person name="Salazar A."/>
            <person name="Thayer N."/>
            <person name="Tice H."/>
            <person name="Tsai M."/>
            <person name="Ustaszewska A."/>
            <person name="Vo N."/>
            <person name="Wheeler J."/>
            <person name="Wu K."/>
            <person name="Yang J."/>
            <person name="Dickson M."/>
            <person name="Cheng J.-F."/>
            <person name="Eichler E.E."/>
            <person name="Olsen A."/>
            <person name="Pennacchio L.A."/>
            <person name="Rokhsar D.S."/>
            <person name="Richardson P."/>
            <person name="Lucas S.M."/>
            <person name="Myers R.M."/>
            <person name="Rubin E.M."/>
        </authorList>
    </citation>
    <scope>NUCLEOTIDE SEQUENCE [LARGE SCALE GENOMIC DNA]</scope>
</reference>
<reference key="5">
    <citation type="submission" date="2005-09" db="EMBL/GenBank/DDBJ databases">
        <authorList>
            <person name="Mural R.J."/>
            <person name="Istrail S."/>
            <person name="Sutton G.G."/>
            <person name="Florea L."/>
            <person name="Halpern A.L."/>
            <person name="Mobarry C.M."/>
            <person name="Lippert R."/>
            <person name="Walenz B."/>
            <person name="Shatkay H."/>
            <person name="Dew I."/>
            <person name="Miller J.R."/>
            <person name="Flanigan M.J."/>
            <person name="Edwards N.J."/>
            <person name="Bolanos R."/>
            <person name="Fasulo D."/>
            <person name="Halldorsson B.V."/>
            <person name="Hannenhalli S."/>
            <person name="Turner R."/>
            <person name="Yooseph S."/>
            <person name="Lu F."/>
            <person name="Nusskern D.R."/>
            <person name="Shue B.C."/>
            <person name="Zheng X.H."/>
            <person name="Zhong F."/>
            <person name="Delcher A.L."/>
            <person name="Huson D.H."/>
            <person name="Kravitz S.A."/>
            <person name="Mouchard L."/>
            <person name="Reinert K."/>
            <person name="Remington K.A."/>
            <person name="Clark A.G."/>
            <person name="Waterman M.S."/>
            <person name="Eichler E.E."/>
            <person name="Adams M.D."/>
            <person name="Hunkapiller M.W."/>
            <person name="Myers E.W."/>
            <person name="Venter J.C."/>
        </authorList>
    </citation>
    <scope>NUCLEOTIDE SEQUENCE [LARGE SCALE GENOMIC DNA]</scope>
</reference>
<reference key="6">
    <citation type="journal article" date="1993" name="Oncogene">
        <title>A survey of protein tyrosine kinase mRNAs expressed in normal human melanocytes.</title>
        <authorList>
            <person name="Lee S.-T."/>
            <person name="Strunk K.M."/>
            <person name="Spritz R.A."/>
        </authorList>
    </citation>
    <scope>NUCLEOTIDE SEQUENCE [MRNA] OF 686-741</scope>
</reference>
<reference key="7">
    <citation type="journal article" date="1990" name="Oncogene">
        <title>Identification and chromosomal mapping of new human tyrosine kinase genes.</title>
        <authorList>
            <person name="Krolewski J.J."/>
            <person name="Lee R."/>
            <person name="Eddy R."/>
            <person name="Shows T.B."/>
            <person name="Dalla-Favera R."/>
        </authorList>
    </citation>
    <scope>TISSUE SPECIFICITY</scope>
</reference>
<reference key="8">
    <citation type="journal article" date="1991" name="Mol. Cell. Biol.">
        <title>Nuclear and cytoplasmic location of the FER tyrosine kinase.</title>
        <authorList>
            <person name="Hao Q.-L."/>
            <person name="Ferris D.K."/>
            <person name="White G."/>
            <person name="Heisterkamp N."/>
            <person name="Groffen J."/>
        </authorList>
    </citation>
    <scope>SUBCELLULAR LOCATION</scope>
</reference>
<reference key="9">
    <citation type="journal article" date="1995" name="Mol. Cell. Biol.">
        <title>The cytoplasmic tyrosine kinase FER is associated with the catenin-like substrate pp120 and is activated by growth factors.</title>
        <authorList>
            <person name="Kim L."/>
            <person name="Wong T.W."/>
        </authorList>
    </citation>
    <scope>FUNCTION IN PHOSPHORYLATION OF CTNND1</scope>
    <scope>AUTOPHOSPHORYLATION</scope>
    <scope>SUBUNIT</scope>
    <scope>INTERACTION WITH CTNND1</scope>
</reference>
<reference key="10">
    <citation type="journal article" date="1998" name="J. Biol. Chem.">
        <title>Growth factor-dependent phosphorylation of the actin-binding protein cortactin is mediated by the cytoplasmic tyrosine kinase FER.</title>
        <authorList>
            <person name="Kim L."/>
            <person name="Wong T.W."/>
        </authorList>
    </citation>
    <scope>FUNCTION IN PHOSPHORYLATION OF CTTN</scope>
    <scope>INTERACTION WITH CTTN; CTNND1 AND PDGFR</scope>
    <scope>MUTAGENESIS OF LYS-591</scope>
    <scope>SUBCELLULAR LOCATION</scope>
</reference>
<reference key="11">
    <citation type="journal article" date="2003" name="Mol. Biol. Cell">
        <title>Identification of Fer tyrosine kinase localized on microtubules as a platelet endothelial cell adhesion molecule-1 phosphorylating kinase in vascular endothelial cells.</title>
        <authorList>
            <person name="Kogata N."/>
            <person name="Masuda M."/>
            <person name="Kamioka Y."/>
            <person name="Yamagishi A."/>
            <person name="Endo A."/>
            <person name="Okada M."/>
            <person name="Mochizuki N."/>
        </authorList>
    </citation>
    <scope>FUNCTION IN PHOSPHORYLATION OF PECAM1; PTPN11 AND GAB1</scope>
    <scope>SUBCELLULAR LOCATION</scope>
    <scope>CATALYTIC ACTIVITY</scope>
    <scope>MUTAGENESIS OF ARG-483</scope>
    <scope>INTERACTION WITH PECAM1</scope>
</reference>
<reference key="12">
    <citation type="journal article" date="2003" name="Mol. Cell. Biol.">
        <title>Tyrosine phosphorylation of plakoglobin causes contrary effects on its association with desmosomes and adherens junction components and modulates beta-catenin-mediated transcription.</title>
        <authorList>
            <person name="Miravet S."/>
            <person name="Piedra J."/>
            <person name="Castano J."/>
            <person name="Raurell I."/>
            <person name="Franci C."/>
            <person name="Dunach M."/>
            <person name="Garcia de Herreros A."/>
        </authorList>
    </citation>
    <scope>FUNCTION IN PHOSPHORYLATION OF JUP AND IN REGULATION OF PROTEIN PHOSPHORYLATION</scope>
</reference>
<reference key="13">
    <citation type="journal article" date="2006" name="J. Cell Biol.">
        <title>Coordination between the actin cytoskeleton and membrane deformation by a novel membrane tubulation domain of PCH proteins is involved in endocytosis.</title>
        <authorList>
            <person name="Tsujita K."/>
            <person name="Suetsugu S."/>
            <person name="Sasaki N."/>
            <person name="Furutani M."/>
            <person name="Oikawa T."/>
            <person name="Takenawa T."/>
        </authorList>
    </citation>
    <scope>SUBCELLULAR LOCATION</scope>
    <scope>LIPID-BINDING</scope>
    <scope>DOMAIN</scope>
</reference>
<reference key="14">
    <citation type="journal article" date="2008" name="Dev. Dyn.">
        <title>Expression of Fer testis (FerT) tyrosine kinase transcript variants and distribution sites of FerT during the development of the acrosome-acroplaxome-manchette complex in rat spermatids.</title>
        <authorList>
            <person name="Kierszenbaum A.L."/>
            <person name="Rivkin E."/>
            <person name="Tres L.L."/>
        </authorList>
    </citation>
    <scope>IDENTIFICATION OF ISOFORM 3</scope>
    <scope>TISSUE SPECIFICITY</scope>
</reference>
<reference key="15">
    <citation type="journal article" date="2008" name="Mol. Cell">
        <title>Kinase-selective enrichment enables quantitative phosphoproteomics of the kinome across the cell cycle.</title>
        <authorList>
            <person name="Daub H."/>
            <person name="Olsen J.V."/>
            <person name="Bairlein M."/>
            <person name="Gnad F."/>
            <person name="Oppermann F.S."/>
            <person name="Korner R."/>
            <person name="Greff Z."/>
            <person name="Keri G."/>
            <person name="Stemmann O."/>
            <person name="Mann M."/>
        </authorList>
    </citation>
    <scope>PHOSPHORYLATION [LARGE SCALE ANALYSIS] AT TYR-402 AND SER-434</scope>
    <scope>IDENTIFICATION BY MASS SPECTROMETRY [LARGE SCALE ANALYSIS]</scope>
    <source>
        <tissue>Cervix carcinoma</tissue>
    </source>
</reference>
<reference key="16">
    <citation type="journal article" date="2009" name="Biochim. Biophys. Acta">
        <title>Specific tyrosine phosphorylation of focal adhesion kinase mediated by Fer tyrosine kinase in suspended hepatocytes.</title>
        <authorList>
            <person name="Oh M.A."/>
            <person name="Choi S."/>
            <person name="Lee M.J."/>
            <person name="Choi M.C."/>
            <person name="Lee S.A."/>
            <person name="Ko W."/>
            <person name="Cance W.G."/>
            <person name="Oh E.S."/>
            <person name="Buday L."/>
            <person name="Kim S.H."/>
            <person name="Lee J.W."/>
        </authorList>
    </citation>
    <scope>FUNCTION IN PHOSPHORYLATION OF PTK2/FAK1</scope>
    <scope>FUNCTION IN REGULATION OF ACTIN CYTOSKELETON</scope>
    <scope>SUBUNIT</scope>
    <scope>IDENTIFICATION IN A COMPLEX WITH CTTN AND PTK2/FAK1</scope>
</reference>
<reference key="17">
    <citation type="journal article" date="2009" name="Cell. Signal.">
        <title>Hsp90 and a tyrosine embedded in the Hsp90 recognition loop are required for the Fer tyrosine kinase activity.</title>
        <authorList>
            <person name="Hikri E."/>
            <person name="Shpungin S."/>
            <person name="Nir U."/>
        </authorList>
    </citation>
    <scope>INTERACTION WITH HSP90</scope>
</reference>
<reference key="18">
    <citation type="journal article" date="2009" name="Mol. Cancer Res.">
        <title>The Fer tyrosine kinase cooperates with interleukin-6 to activate signal transducer and activator of transcription 3 and promote human prostate cancer cell growth.</title>
        <authorList>
            <person name="Zoubeidi A."/>
            <person name="Rocha J."/>
            <person name="Zouanat F.Z."/>
            <person name="Hamel L."/>
            <person name="Scarlata E."/>
            <person name="Aprikian A.G."/>
            <person name="Chevalier S."/>
        </authorList>
    </citation>
    <scope>FUNCTION IN IL6 SIGNALING PATHWAY; CELL PROLIFERATION AND IN PHOSPHORYLATION OF STAT3</scope>
    <scope>INTERACTION WITH STAT3</scope>
</reference>
<reference key="19">
    <citation type="journal article" date="2009" name="Mol. Cell. Proteomics">
        <title>Large-scale proteomics analysis of the human kinome.</title>
        <authorList>
            <person name="Oppermann F.S."/>
            <person name="Gnad F."/>
            <person name="Olsen J.V."/>
            <person name="Hornberger R."/>
            <person name="Greff Z."/>
            <person name="Keri G."/>
            <person name="Mann M."/>
            <person name="Daub H."/>
        </authorList>
    </citation>
    <scope>PHOSPHORYLATION [LARGE SCALE ANALYSIS] AT TYR-402 AND SER-434</scope>
    <scope>IDENTIFICATION BY MASS SPECTROMETRY [LARGE SCALE ANALYSIS]</scope>
</reference>
<reference key="20">
    <citation type="journal article" date="2009" name="Sci. Signal.">
        <title>The tyrosine kinase Fer is a downstream target of the PLD-PA pathway that regulates cell migration.</title>
        <authorList>
            <person name="Itoh T."/>
            <person name="Hasegawa J."/>
            <person name="Tsujita K."/>
            <person name="Kanaho Y."/>
            <person name="Takenawa T."/>
        </authorList>
    </citation>
    <scope>FUNCTION IN REGULATION OF ACTIN CYTOSKELETON AND CELL MIGRATION</scope>
    <scope>CATALYTIC ACTIVITY</scope>
    <scope>DOMAIN</scope>
    <scope>LIPID-BINDING</scope>
    <scope>ACTIVITY REGULATION</scope>
</reference>
<reference key="21">
    <citation type="journal article" date="2010" name="Leukemia">
        <title>FES kinases are required for oncogenic FLT3 signaling.</title>
        <authorList>
            <person name="Voisset E."/>
            <person name="Lopez S."/>
            <person name="Chaix A."/>
            <person name="Georges C."/>
            <person name="Hanssens K."/>
            <person name="Prebet T."/>
            <person name="Dubreuil P."/>
            <person name="De Sepulveda P."/>
        </authorList>
    </citation>
    <scope>FUNCTION IN CELL PROLIFERATION</scope>
    <scope>PHOSPHORYLATION</scope>
    <scope>INTERACTION WITH FLT3</scope>
</reference>
<reference key="22">
    <citation type="journal article" date="2011" name="Proc. Natl. Acad. Sci. U.S.A.">
        <title>FER tyrosine kinase (FER) overexpression mediates resistance to quinacrine through EGF-dependent activation of NF-kappaB.</title>
        <authorList>
            <person name="Guo C."/>
            <person name="Stark G.R."/>
        </authorList>
    </citation>
    <scope>FUNCTION IN ACTIVATION OF NF-KAPPA-B DOWNSTREAM OF EGFR AND CELL PROLIFERATION</scope>
    <scope>INTERACTION WITH EGFR</scope>
    <scope>PHOSPHORYLATION</scope>
</reference>
<reference key="23">
    <citation type="journal article" date="2013" name="J. Proteome Res.">
        <title>Toward a comprehensive characterization of a human cancer cell phosphoproteome.</title>
        <authorList>
            <person name="Zhou H."/>
            <person name="Di Palma S."/>
            <person name="Preisinger C."/>
            <person name="Peng M."/>
            <person name="Polat A.N."/>
            <person name="Heck A.J."/>
            <person name="Mohammed S."/>
        </authorList>
    </citation>
    <scope>PHOSPHORYLATION [LARGE SCALE ANALYSIS] AT SER-434</scope>
    <scope>IDENTIFICATION BY MASS SPECTROMETRY [LARGE SCALE ANALYSIS]</scope>
    <source>
        <tissue>Cervix carcinoma</tissue>
        <tissue>Erythroleukemia</tissue>
    </source>
</reference>
<reference key="24">
    <citation type="submission" date="2009-08" db="PDB data bank">
        <title>Solution structure of SH2 domain of proto-oncogene tyrosine-protein kinase FER from Homo sapiens, Northeast structural genomics consortium (NESG) target HR3461D.</title>
        <authorList>
            <consortium name="Northeast structural genomics consortium (NESG)"/>
        </authorList>
    </citation>
    <scope>STRUCTURE BY NMR OF 453-557</scope>
</reference>
<reference key="25">
    <citation type="journal article" date="2002" name="Nat. Rev. Mol. Cell Biol.">
        <title>Closing in on the biological functions of Fps/Fes and Fer.</title>
        <authorList>
            <person name="Greer P."/>
        </authorList>
    </citation>
    <scope>REVIEW</scope>
</reference>
<reference key="26">
    <citation type="journal article" date="1991" name="Science">
        <title>Mutations of chromosome 5q21 genes in FAP and colorectal cancer patients.</title>
        <authorList>
            <person name="Nishisho I."/>
            <person name="Nakamura Y."/>
            <person name="Miyoshi Y."/>
            <person name="Miki Y."/>
            <person name="Ando H."/>
            <person name="Horii A."/>
            <person name="Koyama K."/>
            <person name="Utsunomiya J."/>
            <person name="Baba S."/>
            <person name="Hedge P."/>
            <person name="Markham A."/>
            <person name="Krush A.J."/>
            <person name="Petersen G.M."/>
            <person name="Hamilton S.R."/>
            <person name="Nilbert M.C."/>
            <person name="Levy D.B."/>
            <person name="Bryan T.M."/>
            <person name="Preisinger A.C."/>
            <person name="Smith K.J."/>
            <person name="Su L.-K."/>
            <person name="Kinzler K.W."/>
            <person name="Vogelstein B."/>
        </authorList>
    </citation>
    <scope>VARIANT VAL-439</scope>
</reference>
<reference key="27">
    <citation type="journal article" date="2007" name="Nature">
        <title>Patterns of somatic mutation in human cancer genomes.</title>
        <authorList>
            <person name="Greenman C."/>
            <person name="Stephens P."/>
            <person name="Smith R."/>
            <person name="Dalgliesh G.L."/>
            <person name="Hunter C."/>
            <person name="Bignell G."/>
            <person name="Davies H."/>
            <person name="Teague J."/>
            <person name="Butler A."/>
            <person name="Stevens C."/>
            <person name="Edkins S."/>
            <person name="O'Meara S."/>
            <person name="Vastrik I."/>
            <person name="Schmidt E.E."/>
            <person name="Avis T."/>
            <person name="Barthorpe S."/>
            <person name="Bhamra G."/>
            <person name="Buck G."/>
            <person name="Choudhury B."/>
            <person name="Clements J."/>
            <person name="Cole J."/>
            <person name="Dicks E."/>
            <person name="Forbes S."/>
            <person name="Gray K."/>
            <person name="Halliday K."/>
            <person name="Harrison R."/>
            <person name="Hills K."/>
            <person name="Hinton J."/>
            <person name="Jenkinson A."/>
            <person name="Jones D."/>
            <person name="Menzies A."/>
            <person name="Mironenko T."/>
            <person name="Perry J."/>
            <person name="Raine K."/>
            <person name="Richardson D."/>
            <person name="Shepherd R."/>
            <person name="Small A."/>
            <person name="Tofts C."/>
            <person name="Varian J."/>
            <person name="Webb T."/>
            <person name="West S."/>
            <person name="Widaa S."/>
            <person name="Yates A."/>
            <person name="Cahill D.P."/>
            <person name="Louis D.N."/>
            <person name="Goldstraw P."/>
            <person name="Nicholson A.G."/>
            <person name="Brasseur F."/>
            <person name="Looijenga L."/>
            <person name="Weber B.L."/>
            <person name="Chiew Y.-E."/>
            <person name="DeFazio A."/>
            <person name="Greaves M.F."/>
            <person name="Green A.R."/>
            <person name="Campbell P."/>
            <person name="Birney E."/>
            <person name="Easton D.F."/>
            <person name="Chenevix-Trench G."/>
            <person name="Tan M.-H."/>
            <person name="Khoo S.K."/>
            <person name="Teh B.T."/>
            <person name="Yuen S.T."/>
            <person name="Leung S.Y."/>
            <person name="Wooster R."/>
            <person name="Futreal P.A."/>
            <person name="Stratton M.R."/>
        </authorList>
    </citation>
    <scope>VARIANTS [LARGE SCALE ANALYSIS] PHE-128; GLN-404; VAL-412; VAL-439; PRO-443; CYS-460 AND GLN-813</scope>
</reference>
<name>FER_HUMAN</name>
<sequence>MGFGSDLKNSHEAVLKLQDWELRLLETVKKFMALRIKSDKEYASTLQNLCNQVDKESTVQMNYVSNVSKSWLLMIQQTEQLSRIMKTHAEDLNSGPLHRLTMMIKDKQQVKKSYIGVHQQIEAEMIKVTKTELEKLKCSYRQLIKEMNSAKEKYKEALAKGKETEKAKERYDKATMKLHMLHNQYVLALKGAQLHQNQYYDITLPLLLDSLQKMQEEMIKALKGIFDEYSQITSLVTEEIVNVHKEIQMSVEQIDPSTEYNNFIDVHRTTAAKEQEIEFDTSLLEENENLQANEIMWNNLTAESLQVMLKTLAEELMQTQQMLLNKEEAVLELEKRIEESSETCEKKSDIVLLLSQKQALEELKQSVQQLRCTEAKFSAQKELLEQKVQENDGKEPPPVVNYEEDARSVTSMERKERLSKFESIRHSIAGIIRSPKSALGSSALSDMISISEKPLAEQDWYHGAIPRIEAQELLKKQGDFLVRESHGKPGEYVLSVYSDGQRRHFIIQYVDNMYRFEGTGFSNIPQLIDHHYTTKQVITKKSGVVLLNPIPKDKKWILSHEDVILGELLGKGNFGEVYKGTLKDKTSVAVKTCKEDLPQELKIKFLQEAKILKQYDHPNIVKLIGVCTQRQPVYIIMELVSGGDFLTFLRRKKDELKLKQLVKFSLDAAAGMLYLESKNCIHRDLAARNCLVGENNVLKISDFGMSRQEDGGVYSSSGLKQIPIKWTAPEALNYGRYSSESDVWSFGILLWETFSLGVCPYPGMTNQQAREQVERGYRMSAPQHCPEDISKIMMKCWDYKPENRPKFSELQKELTIIKRKLT</sequence>
<proteinExistence type="evidence at protein level"/>